<accession>Q7VQW8</accession>
<comment type="catalytic activity">
    <reaction evidence="1">
        <text>D-erythro-1-(imidazol-4-yl)glycerol 3-phosphate = 3-(imidazol-4-yl)-2-oxopropyl phosphate + H2O</text>
        <dbReference type="Rhea" id="RHEA:11040"/>
        <dbReference type="ChEBI" id="CHEBI:15377"/>
        <dbReference type="ChEBI" id="CHEBI:57766"/>
        <dbReference type="ChEBI" id="CHEBI:58278"/>
        <dbReference type="EC" id="4.2.1.19"/>
    </reaction>
</comment>
<comment type="catalytic activity">
    <reaction evidence="1">
        <text>L-histidinol phosphate + H2O = L-histidinol + phosphate</text>
        <dbReference type="Rhea" id="RHEA:14465"/>
        <dbReference type="ChEBI" id="CHEBI:15377"/>
        <dbReference type="ChEBI" id="CHEBI:43474"/>
        <dbReference type="ChEBI" id="CHEBI:57699"/>
        <dbReference type="ChEBI" id="CHEBI:57980"/>
        <dbReference type="EC" id="3.1.3.15"/>
    </reaction>
</comment>
<comment type="cofactor">
    <cofactor evidence="1">
        <name>Mg(2+)</name>
        <dbReference type="ChEBI" id="CHEBI:18420"/>
    </cofactor>
</comment>
<comment type="cofactor">
    <cofactor evidence="1">
        <name>Zn(2+)</name>
        <dbReference type="ChEBI" id="CHEBI:29105"/>
    </cofactor>
</comment>
<comment type="pathway">
    <text evidence="1">Amino-acid biosynthesis; L-histidine biosynthesis; L-histidine from 5-phospho-alpha-D-ribose 1-diphosphate: step 6/9.</text>
</comment>
<comment type="pathway">
    <text evidence="1">Amino-acid biosynthesis; L-histidine biosynthesis; L-histidine from 5-phospho-alpha-D-ribose 1-diphosphate: step 8/9.</text>
</comment>
<comment type="subcellular location">
    <subcellularLocation>
        <location evidence="1">Cytoplasm</location>
    </subcellularLocation>
</comment>
<comment type="similarity">
    <text evidence="1">In the N-terminal section; belongs to the histidinol-phosphatase family.</text>
</comment>
<comment type="similarity">
    <text evidence="1">In the C-terminal section; belongs to the imidazoleglycerol-phosphate dehydratase family.</text>
</comment>
<name>HIS7_BLOFL</name>
<keyword id="KW-0028">Amino-acid biosynthesis</keyword>
<keyword id="KW-0963">Cytoplasm</keyword>
<keyword id="KW-0368">Histidine biosynthesis</keyword>
<keyword id="KW-0378">Hydrolase</keyword>
<keyword id="KW-0456">Lyase</keyword>
<keyword id="KW-0460">Magnesium</keyword>
<keyword id="KW-0479">Metal-binding</keyword>
<keyword id="KW-0511">Multifunctional enzyme</keyword>
<keyword id="KW-1185">Reference proteome</keyword>
<keyword id="KW-0862">Zinc</keyword>
<proteinExistence type="inferred from homology"/>
<feature type="chain" id="PRO_0000158205" description="Histidine biosynthesis bifunctional protein HisB">
    <location>
        <begin position="1"/>
        <end position="357"/>
    </location>
</feature>
<feature type="region of interest" description="Histidinol-phosphatase" evidence="1">
    <location>
        <begin position="1"/>
        <end position="167"/>
    </location>
</feature>
<feature type="region of interest" description="Imidazoleglycerol-phosphate dehydratase" evidence="1">
    <location>
        <begin position="168"/>
        <end position="357"/>
    </location>
</feature>
<feature type="active site" description="Nucleophile" evidence="1">
    <location>
        <position position="9"/>
    </location>
</feature>
<feature type="active site" description="Proton donor" evidence="1">
    <location>
        <position position="11"/>
    </location>
</feature>
<feature type="binding site" evidence="1">
    <location>
        <position position="9"/>
    </location>
    <ligand>
        <name>Mg(2+)</name>
        <dbReference type="ChEBI" id="CHEBI:18420"/>
    </ligand>
</feature>
<feature type="binding site" evidence="1">
    <location>
        <position position="11"/>
    </location>
    <ligand>
        <name>Mg(2+)</name>
        <dbReference type="ChEBI" id="CHEBI:18420"/>
    </ligand>
</feature>
<feature type="binding site" evidence="1">
    <location>
        <position position="93"/>
    </location>
    <ligand>
        <name>Zn(2+)</name>
        <dbReference type="ChEBI" id="CHEBI:29105"/>
    </ligand>
</feature>
<feature type="binding site" evidence="1">
    <location>
        <position position="95"/>
    </location>
    <ligand>
        <name>Zn(2+)</name>
        <dbReference type="ChEBI" id="CHEBI:29105"/>
    </ligand>
</feature>
<feature type="binding site" evidence="1">
    <location>
        <position position="101"/>
    </location>
    <ligand>
        <name>Zn(2+)</name>
        <dbReference type="ChEBI" id="CHEBI:29105"/>
    </ligand>
</feature>
<feature type="binding site" evidence="1">
    <location>
        <position position="103"/>
    </location>
    <ligand>
        <name>Zn(2+)</name>
        <dbReference type="ChEBI" id="CHEBI:29105"/>
    </ligand>
</feature>
<feature type="binding site" evidence="1">
    <location>
        <position position="130"/>
    </location>
    <ligand>
        <name>Mg(2+)</name>
        <dbReference type="ChEBI" id="CHEBI:18420"/>
    </ligand>
</feature>
<evidence type="ECO:0000255" key="1">
    <source>
        <dbReference type="HAMAP-Rule" id="MF_01022"/>
    </source>
</evidence>
<protein>
    <recommendedName>
        <fullName evidence="1">Histidine biosynthesis bifunctional protein HisB</fullName>
    </recommendedName>
    <domain>
        <recommendedName>
            <fullName evidence="1">Histidinol-phosphatase</fullName>
            <ecNumber evidence="1">3.1.3.15</ecNumber>
        </recommendedName>
    </domain>
    <domain>
        <recommendedName>
            <fullName evidence="1">Imidazoleglycerol-phosphate dehydratase</fullName>
            <shortName evidence="1">IGPD</shortName>
            <ecNumber evidence="1">4.2.1.19</ecNumber>
        </recommendedName>
    </domain>
</protein>
<dbReference type="EC" id="3.1.3.15" evidence="1"/>
<dbReference type="EC" id="4.2.1.19" evidence="1"/>
<dbReference type="EMBL" id="BX248583">
    <property type="protein sequence ID" value="CAD83524.1"/>
    <property type="molecule type" value="Genomic_DNA"/>
</dbReference>
<dbReference type="SMR" id="Q7VQW8"/>
<dbReference type="STRING" id="203907.Bfl465"/>
<dbReference type="KEGG" id="bfl:Bfl465"/>
<dbReference type="eggNOG" id="COG0131">
    <property type="taxonomic scope" value="Bacteria"/>
</dbReference>
<dbReference type="eggNOG" id="COG0241">
    <property type="taxonomic scope" value="Bacteria"/>
</dbReference>
<dbReference type="HOGENOM" id="CLU_044308_0_0_6"/>
<dbReference type="OrthoDB" id="9790411at2"/>
<dbReference type="UniPathway" id="UPA00031">
    <property type="reaction ID" value="UER00011"/>
</dbReference>
<dbReference type="UniPathway" id="UPA00031">
    <property type="reaction ID" value="UER00013"/>
</dbReference>
<dbReference type="Proteomes" id="UP000002192">
    <property type="component" value="Chromosome"/>
</dbReference>
<dbReference type="GO" id="GO:0005737">
    <property type="term" value="C:cytoplasm"/>
    <property type="evidence" value="ECO:0007669"/>
    <property type="project" value="UniProtKB-SubCell"/>
</dbReference>
<dbReference type="GO" id="GO:0004401">
    <property type="term" value="F:histidinol-phosphatase activity"/>
    <property type="evidence" value="ECO:0007669"/>
    <property type="project" value="UniProtKB-UniRule"/>
</dbReference>
<dbReference type="GO" id="GO:0004424">
    <property type="term" value="F:imidazoleglycerol-phosphate dehydratase activity"/>
    <property type="evidence" value="ECO:0007669"/>
    <property type="project" value="UniProtKB-UniRule"/>
</dbReference>
<dbReference type="GO" id="GO:0046872">
    <property type="term" value="F:metal ion binding"/>
    <property type="evidence" value="ECO:0007669"/>
    <property type="project" value="UniProtKB-KW"/>
</dbReference>
<dbReference type="GO" id="GO:0000105">
    <property type="term" value="P:L-histidine biosynthetic process"/>
    <property type="evidence" value="ECO:0007669"/>
    <property type="project" value="UniProtKB-UniRule"/>
</dbReference>
<dbReference type="CDD" id="cd07503">
    <property type="entry name" value="HAD_HisB-N"/>
    <property type="match status" value="1"/>
</dbReference>
<dbReference type="CDD" id="cd07914">
    <property type="entry name" value="IGPD"/>
    <property type="match status" value="1"/>
</dbReference>
<dbReference type="FunFam" id="3.30.230.40:FF:000001">
    <property type="entry name" value="Imidazoleglycerol-phosphate dehydratase HisB"/>
    <property type="match status" value="1"/>
</dbReference>
<dbReference type="FunFam" id="3.30.230.40:FF:000003">
    <property type="entry name" value="Imidazoleglycerol-phosphate dehydratase HisB"/>
    <property type="match status" value="1"/>
</dbReference>
<dbReference type="Gene3D" id="3.40.50.1000">
    <property type="entry name" value="HAD superfamily/HAD-like"/>
    <property type="match status" value="1"/>
</dbReference>
<dbReference type="Gene3D" id="3.30.230.40">
    <property type="entry name" value="Imidazole glycerol phosphate dehydratase, domain 1"/>
    <property type="match status" value="2"/>
</dbReference>
<dbReference type="HAMAP" id="MF_01022">
    <property type="entry name" value="Bifunc_HisB"/>
    <property type="match status" value="1"/>
</dbReference>
<dbReference type="HAMAP" id="MF_00076">
    <property type="entry name" value="HisB"/>
    <property type="match status" value="1"/>
</dbReference>
<dbReference type="InterPro" id="IPR036412">
    <property type="entry name" value="HAD-like_sf"/>
</dbReference>
<dbReference type="InterPro" id="IPR006549">
    <property type="entry name" value="HAD-SF_hydro_IIIA"/>
</dbReference>
<dbReference type="InterPro" id="IPR023214">
    <property type="entry name" value="HAD_sf"/>
</dbReference>
<dbReference type="InterPro" id="IPR020566">
    <property type="entry name" value="His_synth_bifunc_HisB"/>
</dbReference>
<dbReference type="InterPro" id="IPR005954">
    <property type="entry name" value="HisB_N"/>
</dbReference>
<dbReference type="InterPro" id="IPR006543">
    <property type="entry name" value="Histidinol-phos"/>
</dbReference>
<dbReference type="InterPro" id="IPR038494">
    <property type="entry name" value="IGPD_sf"/>
</dbReference>
<dbReference type="InterPro" id="IPR000807">
    <property type="entry name" value="ImidazoleglycerolP_deHydtase"/>
</dbReference>
<dbReference type="InterPro" id="IPR020565">
    <property type="entry name" value="ImidazoleglycerP_deHydtase_CS"/>
</dbReference>
<dbReference type="InterPro" id="IPR013954">
    <property type="entry name" value="PNK3P"/>
</dbReference>
<dbReference type="InterPro" id="IPR020568">
    <property type="entry name" value="Ribosomal_Su5_D2-typ_SF"/>
</dbReference>
<dbReference type="NCBIfam" id="TIGR01662">
    <property type="entry name" value="HAD-SF-IIIA"/>
    <property type="match status" value="1"/>
</dbReference>
<dbReference type="NCBIfam" id="TIGR01261">
    <property type="entry name" value="hisB_Nterm"/>
    <property type="match status" value="1"/>
</dbReference>
<dbReference type="NCBIfam" id="TIGR01656">
    <property type="entry name" value="Histidinol-ppas"/>
    <property type="match status" value="1"/>
</dbReference>
<dbReference type="NCBIfam" id="NF002111">
    <property type="entry name" value="PRK00951.2-1"/>
    <property type="match status" value="1"/>
</dbReference>
<dbReference type="NCBIfam" id="NF003937">
    <property type="entry name" value="PRK05446.1"/>
    <property type="match status" value="1"/>
</dbReference>
<dbReference type="PANTHER" id="PTHR23133:SF2">
    <property type="entry name" value="IMIDAZOLEGLYCEROL-PHOSPHATE DEHYDRATASE"/>
    <property type="match status" value="1"/>
</dbReference>
<dbReference type="PANTHER" id="PTHR23133">
    <property type="entry name" value="IMIDAZOLEGLYCEROL-PHOSPHATE DEHYDRATASE HIS7"/>
    <property type="match status" value="1"/>
</dbReference>
<dbReference type="Pfam" id="PF00475">
    <property type="entry name" value="IGPD"/>
    <property type="match status" value="1"/>
</dbReference>
<dbReference type="Pfam" id="PF08645">
    <property type="entry name" value="PNK3P"/>
    <property type="match status" value="1"/>
</dbReference>
<dbReference type="SUPFAM" id="SSF56784">
    <property type="entry name" value="HAD-like"/>
    <property type="match status" value="1"/>
</dbReference>
<dbReference type="SUPFAM" id="SSF54211">
    <property type="entry name" value="Ribosomal protein S5 domain 2-like"/>
    <property type="match status" value="2"/>
</dbReference>
<dbReference type="PROSITE" id="PS00954">
    <property type="entry name" value="IGP_DEHYDRATASE_1"/>
    <property type="match status" value="1"/>
</dbReference>
<dbReference type="PROSITE" id="PS00955">
    <property type="entry name" value="IGP_DEHYDRATASE_2"/>
    <property type="match status" value="1"/>
</dbReference>
<gene>
    <name evidence="1" type="primary">hisB</name>
    <name type="ordered locus">Bfl465</name>
</gene>
<reference key="1">
    <citation type="journal article" date="2003" name="Proc. Natl. Acad. Sci. U.S.A.">
        <title>The genome sequence of Blochmannia floridanus: comparative analysis of reduced genomes.</title>
        <authorList>
            <person name="Gil R."/>
            <person name="Silva F.J."/>
            <person name="Zientz E."/>
            <person name="Delmotte F."/>
            <person name="Gonzalez-Candelas F."/>
            <person name="Latorre A."/>
            <person name="Rausell C."/>
            <person name="Kamerbeek J."/>
            <person name="Gadau J."/>
            <person name="Hoelldobler B."/>
            <person name="van Ham R.C.H.J."/>
            <person name="Gross R."/>
            <person name="Moya A."/>
        </authorList>
    </citation>
    <scope>NUCLEOTIDE SEQUENCE [LARGE SCALE GENOMIC DNA]</scope>
</reference>
<sequence length="357" mass="41262">MNDKILFIDRDGTLIHEPKDNFQIDSLDKLLLEPYVIPTLIALKNIKFKFIIVTNQNGLGTDLFPKTKFNKPHQFMIQIFKSQGIKFDQILICPHLPEDQCNCRKPKTGLISCWLKNKSLDMPNSYVIGDRDTDIQFAHNIGIQGIKYHQIHFNWKKIHKYLMQNSHRVAHIQRITNETNVDVKIWLNQCDQNKINTGIHFFDHMLEQIAIHAKIRMHIITKGDLHIDDHHTIEDTALSLGEALNQALGDKRGIGRFGFTLPMDESIAQCILDLSGRTYFDYQAEYSLQKIGNFSTHMIEHFFRSLSSKMHCTLHLKVIGNNDHHKAESLFKSFGKSLNQAIYIQHNQIPSSKGILL</sequence>
<organism>
    <name type="scientific">Blochmanniella floridana</name>
    <dbReference type="NCBI Taxonomy" id="203907"/>
    <lineage>
        <taxon>Bacteria</taxon>
        <taxon>Pseudomonadati</taxon>
        <taxon>Pseudomonadota</taxon>
        <taxon>Gammaproteobacteria</taxon>
        <taxon>Enterobacterales</taxon>
        <taxon>Enterobacteriaceae</taxon>
        <taxon>ant endosymbionts</taxon>
        <taxon>Candidatus Blochmanniella</taxon>
    </lineage>
</organism>